<comment type="function">
    <text evidence="1">Core subunit of the mitochondrial membrane respiratory chain NADH dehydrogenase (Complex I) that is believed to belong to the minimal assembly required for catalysis. Complex I functions in the transfer of electrons from NADH to the respiratory chain. The immediate electron acceptor for the enzyme is believed to be ubiquinone (By similarity).</text>
</comment>
<comment type="catalytic activity">
    <reaction>
        <text>a ubiquinone + NADH + 5 H(+)(in) = a ubiquinol + NAD(+) + 4 H(+)(out)</text>
        <dbReference type="Rhea" id="RHEA:29091"/>
        <dbReference type="Rhea" id="RHEA-COMP:9565"/>
        <dbReference type="Rhea" id="RHEA-COMP:9566"/>
        <dbReference type="ChEBI" id="CHEBI:15378"/>
        <dbReference type="ChEBI" id="CHEBI:16389"/>
        <dbReference type="ChEBI" id="CHEBI:17976"/>
        <dbReference type="ChEBI" id="CHEBI:57540"/>
        <dbReference type="ChEBI" id="CHEBI:57945"/>
        <dbReference type="EC" id="7.1.1.2"/>
    </reaction>
</comment>
<comment type="subcellular location">
    <subcellularLocation>
        <location evidence="1">Mitochondrion membrane</location>
        <topology evidence="1">Multi-pass membrane protein</topology>
    </subcellularLocation>
</comment>
<comment type="similarity">
    <text evidence="3">Belongs to the complex I subunit 3 family.</text>
</comment>
<sequence length="116" mass="12909">MNLITTIITITITLSAVLATISFWLPQISPDAEKLSPYECGFDPLGSARLPFSLRFFLIAILFLLFDLEIALLLPLPWGDQLDTPTLTLIWSTAVLALLTLGLIYEWTQGGLEWAE</sequence>
<accession>P25707</accession>
<protein>
    <recommendedName>
        <fullName>NADH-ubiquinone oxidoreductase chain 3</fullName>
        <ecNumber>7.1.1.2</ecNumber>
    </recommendedName>
    <alternativeName>
        <fullName>NADH dehydrogenase subunit 3</fullName>
    </alternativeName>
</protein>
<keyword id="KW-0249">Electron transport</keyword>
<keyword id="KW-0472">Membrane</keyword>
<keyword id="KW-0496">Mitochondrion</keyword>
<keyword id="KW-0520">NAD</keyword>
<keyword id="KW-1185">Reference proteome</keyword>
<keyword id="KW-0679">Respiratory chain</keyword>
<keyword id="KW-1278">Translocase</keyword>
<keyword id="KW-0812">Transmembrane</keyword>
<keyword id="KW-1133">Transmembrane helix</keyword>
<keyword id="KW-0813">Transport</keyword>
<keyword id="KW-0830">Ubiquinone</keyword>
<evidence type="ECO:0000250" key="1"/>
<evidence type="ECO:0000255" key="2"/>
<evidence type="ECO:0000305" key="3"/>
<name>NU3M_ONCTS</name>
<feature type="chain" id="PRO_0000117781" description="NADH-ubiquinone oxidoreductase chain 3">
    <location>
        <begin position="1"/>
        <end position="116"/>
    </location>
</feature>
<feature type="transmembrane region" description="Helical" evidence="2">
    <location>
        <begin position="3"/>
        <end position="23"/>
    </location>
</feature>
<feature type="transmembrane region" description="Helical" evidence="2">
    <location>
        <begin position="56"/>
        <end position="76"/>
    </location>
</feature>
<feature type="transmembrane region" description="Helical" evidence="2">
    <location>
        <begin position="87"/>
        <end position="107"/>
    </location>
</feature>
<geneLocation type="mitochondrion"/>
<gene>
    <name type="primary">MT-ND3</name>
    <name type="synonym">MTND3</name>
    <name type="synonym">NADH3</name>
    <name type="synonym">ND3</name>
</gene>
<dbReference type="EC" id="7.1.1.2"/>
<dbReference type="PIR" id="A30401">
    <property type="entry name" value="A30401"/>
</dbReference>
<dbReference type="RefSeq" id="NP_148945.1">
    <property type="nucleotide sequence ID" value="NC_002980.1"/>
</dbReference>
<dbReference type="SMR" id="P25707"/>
<dbReference type="Ensembl" id="ENSOTST00005000026.1">
    <property type="protein sequence ID" value="ENSOTSP00005000009.1"/>
    <property type="gene ID" value="ENSOTSG00005000026.1"/>
</dbReference>
<dbReference type="GeneID" id="803442"/>
<dbReference type="KEGG" id="otw:KEF73_p06"/>
<dbReference type="CTD" id="4537"/>
<dbReference type="GeneTree" id="ENSGT00390000011605"/>
<dbReference type="OrthoDB" id="62658at7898"/>
<dbReference type="Proteomes" id="UP000694402">
    <property type="component" value="Unassembled WGS sequence"/>
</dbReference>
<dbReference type="GO" id="GO:0031966">
    <property type="term" value="C:mitochondrial membrane"/>
    <property type="evidence" value="ECO:0007669"/>
    <property type="project" value="UniProtKB-SubCell"/>
</dbReference>
<dbReference type="GO" id="GO:0030964">
    <property type="term" value="C:NADH dehydrogenase complex"/>
    <property type="evidence" value="ECO:0007669"/>
    <property type="project" value="TreeGrafter"/>
</dbReference>
<dbReference type="GO" id="GO:0008137">
    <property type="term" value="F:NADH dehydrogenase (ubiquinone) activity"/>
    <property type="evidence" value="ECO:0007669"/>
    <property type="project" value="UniProtKB-EC"/>
</dbReference>
<dbReference type="FunFam" id="1.20.58.1610:FF:000004">
    <property type="entry name" value="NADH-quinone oxidoreductase subunit A"/>
    <property type="match status" value="1"/>
</dbReference>
<dbReference type="Gene3D" id="1.20.58.1610">
    <property type="entry name" value="NADH:ubiquinone/plastoquinone oxidoreductase, chain 3"/>
    <property type="match status" value="1"/>
</dbReference>
<dbReference type="InterPro" id="IPR000440">
    <property type="entry name" value="NADH_UbQ/plastoQ_OxRdtase_su3"/>
</dbReference>
<dbReference type="InterPro" id="IPR038430">
    <property type="entry name" value="NDAH_ubi_oxred_su3_sf"/>
</dbReference>
<dbReference type="PANTHER" id="PTHR11058">
    <property type="entry name" value="NADH-UBIQUINONE OXIDOREDUCTASE CHAIN 3"/>
    <property type="match status" value="1"/>
</dbReference>
<dbReference type="PANTHER" id="PTHR11058:SF9">
    <property type="entry name" value="NADH-UBIQUINONE OXIDOREDUCTASE CHAIN 3"/>
    <property type="match status" value="1"/>
</dbReference>
<dbReference type="Pfam" id="PF00507">
    <property type="entry name" value="Oxidored_q4"/>
    <property type="match status" value="1"/>
</dbReference>
<organism>
    <name type="scientific">Oncorhynchus tshawytscha</name>
    <name type="common">Chinook salmon</name>
    <name type="synonym">Salmo tshawytscha</name>
    <dbReference type="NCBI Taxonomy" id="74940"/>
    <lineage>
        <taxon>Eukaryota</taxon>
        <taxon>Metazoa</taxon>
        <taxon>Chordata</taxon>
        <taxon>Craniata</taxon>
        <taxon>Vertebrata</taxon>
        <taxon>Euteleostomi</taxon>
        <taxon>Actinopterygii</taxon>
        <taxon>Neopterygii</taxon>
        <taxon>Teleostei</taxon>
        <taxon>Protacanthopterygii</taxon>
        <taxon>Salmoniformes</taxon>
        <taxon>Salmonidae</taxon>
        <taxon>Salmoninae</taxon>
        <taxon>Oncorhynchus</taxon>
    </lineage>
</organism>
<reference key="1">
    <citation type="journal article" date="1989" name="J. Mol. Evol.">
        <title>Variation in salmonid mitochondrial DNA: evolutionary constraints and mechanisms of substitution.</title>
        <authorList>
            <person name="Thomas W.K."/>
            <person name="Beckenbach A.T."/>
        </authorList>
    </citation>
    <scope>NUCLEOTIDE SEQUENCE</scope>
</reference>
<proteinExistence type="inferred from homology"/>